<feature type="transit peptide" description="Chloroplast" evidence="2">
    <location>
        <begin position="1"/>
        <end position="41"/>
    </location>
</feature>
<feature type="chain" id="PRO_0000447231" description="Protein BUNDLE SHEATH DEFECTIVE 2, chloroplastic">
    <location>
        <begin position="42"/>
        <end position="156"/>
    </location>
</feature>
<feature type="binding site" evidence="1">
    <location>
        <position position="78"/>
    </location>
    <ligand>
        <name>Zn(2+)</name>
        <dbReference type="ChEBI" id="CHEBI:29105"/>
        <label>1</label>
    </ligand>
</feature>
<feature type="binding site" evidence="1">
    <location>
        <position position="81"/>
    </location>
    <ligand>
        <name>Zn(2+)</name>
        <dbReference type="ChEBI" id="CHEBI:29105"/>
        <label>1</label>
    </ligand>
</feature>
<feature type="binding site" evidence="1">
    <location>
        <position position="89"/>
    </location>
    <ligand>
        <name>Zn(2+)</name>
        <dbReference type="ChEBI" id="CHEBI:29105"/>
        <label>2</label>
    </ligand>
</feature>
<feature type="binding site" evidence="1">
    <location>
        <position position="92"/>
    </location>
    <ligand>
        <name>Zn(2+)</name>
        <dbReference type="ChEBI" id="CHEBI:29105"/>
        <label>2</label>
    </ligand>
</feature>
<feature type="binding site" evidence="1">
    <location>
        <position position="133"/>
    </location>
    <ligand>
        <name>Zn(2+)</name>
        <dbReference type="ChEBI" id="CHEBI:29105"/>
        <label>2</label>
    </ligand>
</feature>
<feature type="binding site" evidence="1">
    <location>
        <position position="136"/>
    </location>
    <ligand>
        <name>Zn(2+)</name>
        <dbReference type="ChEBI" id="CHEBI:29105"/>
        <label>2</label>
    </ligand>
</feature>
<feature type="binding site" evidence="1">
    <location>
        <position position="144"/>
    </location>
    <ligand>
        <name>Zn(2+)</name>
        <dbReference type="ChEBI" id="CHEBI:29105"/>
        <label>1</label>
    </ligand>
</feature>
<feature type="binding site" evidence="1">
    <location>
        <position position="147"/>
    </location>
    <ligand>
        <name>Zn(2+)</name>
        <dbReference type="ChEBI" id="CHEBI:29105"/>
        <label>1</label>
    </ligand>
</feature>
<feature type="mutagenesis site" description="Impaired chaperone properties; when associated with S-78, S-81, S-89, S-92, S-133, S-136, S-144 and S-147." evidence="3">
    <original>C</original>
    <variation>S</variation>
    <location>
        <position position="42"/>
    </location>
</feature>
<feature type="mutagenesis site" description="Impaired chaperone properties; when associated with S-42, S-81, S-89, S-92, S-133, S-136, S-144 and S-147." evidence="3">
    <original>C</original>
    <variation>S</variation>
    <location>
        <position position="78"/>
    </location>
</feature>
<feature type="mutagenesis site" description="Impaired chaperone properties; when associated with S-42, S-78, S-89, S-92, S-133, S-136, S-144 and S-147." evidence="3">
    <original>C</original>
    <variation>S</variation>
    <location>
        <position position="81"/>
    </location>
</feature>
<feature type="mutagenesis site" description="Impaired chaperone properties; when associated with S-42, S-78, S-81, S-92, S-133, S-136, S-144 and S-147." evidence="3">
    <original>C</original>
    <variation>S</variation>
    <location>
        <position position="89"/>
    </location>
</feature>
<feature type="mutagenesis site" description="Impaired chaperone properties; when associated with S-42, S-78, S-81, S-89, S-133, S-136, S-144 and S-147." evidence="3">
    <original>C</original>
    <variation>S</variation>
    <location>
        <position position="92"/>
    </location>
</feature>
<feature type="mutagenesis site" description="Impaired chaperone properties; when associated with S-42, S-78, S-81, S-89, S-92, S-136, S-144 and S-147." evidence="3">
    <original>C</original>
    <variation>S</variation>
    <location>
        <position position="133"/>
    </location>
</feature>
<feature type="mutagenesis site" description="Impaired chaperone properties; when associated with S-42, S-78, S-81, S-89, S-92, S-133, S-144 and S-147." evidence="3">
    <original>C</original>
    <variation>S</variation>
    <location>
        <position position="136"/>
    </location>
</feature>
<feature type="mutagenesis site" description="Impaired chaperone properties; when associated with S-42, S-78, S-81, S-89, S-92, S-133, S-136 and S-147." evidence="3">
    <original>C</original>
    <variation>S</variation>
    <location>
        <position position="144"/>
    </location>
</feature>
<feature type="mutagenesis site" description="Impaired chaperone properties; when associated with S-42, S-78, S-81, S-89, S-92, S-133, S-136 and S-144." evidence="3">
    <original>C</original>
    <variation>S</variation>
    <location>
        <position position="147"/>
    </location>
</feature>
<name>BSD2_CHLRE</name>
<sequence>MNSAALNARTASVAPQPQACHACKCRQLLSRRVPPAQRQVECSAIAPETLQDIIVGGAVVGAVSVALYAGLKKDPVPCSLCQGTGGIRCFACGGDGRNATVSRDDLYDSKALGGGVAPPKRDPLGRTINPRDCKVCRGAGLVLCSQCKGTGFQSAF</sequence>
<proteinExistence type="evidence at protein level"/>
<reference key="1">
    <citation type="journal article" date="2007" name="Science">
        <title>The Chlamydomonas genome reveals the evolution of key animal and plant functions.</title>
        <authorList>
            <person name="Merchant S.S."/>
            <person name="Prochnik S.E."/>
            <person name="Vallon O."/>
            <person name="Harris E.H."/>
            <person name="Karpowicz S.J."/>
            <person name="Witman G.B."/>
            <person name="Terry A."/>
            <person name="Salamov A."/>
            <person name="Fritz-Laylin L.K."/>
            <person name="Marechal-Drouard L."/>
            <person name="Marshall W.F."/>
            <person name="Qu L.H."/>
            <person name="Nelson D.R."/>
            <person name="Sanderfoot A.A."/>
            <person name="Spalding M.H."/>
            <person name="Kapitonov V.V."/>
            <person name="Ren Q."/>
            <person name="Ferris P."/>
            <person name="Lindquist E."/>
            <person name="Shapiro H."/>
            <person name="Lucas S.M."/>
            <person name="Grimwood J."/>
            <person name="Schmutz J."/>
            <person name="Cardol P."/>
            <person name="Cerutti H."/>
            <person name="Chanfreau G."/>
            <person name="Chen C.L."/>
            <person name="Cognat V."/>
            <person name="Croft M.T."/>
            <person name="Dent R."/>
            <person name="Dutcher S."/>
            <person name="Fernandez E."/>
            <person name="Fukuzawa H."/>
            <person name="Gonzalez-Ballester D."/>
            <person name="Gonzalez-Halphen D."/>
            <person name="Hallmann A."/>
            <person name="Hanikenne M."/>
            <person name="Hippler M."/>
            <person name="Inwood W."/>
            <person name="Jabbari K."/>
            <person name="Kalanon M."/>
            <person name="Kuras R."/>
            <person name="Lefebvre P.A."/>
            <person name="Lemaire S.D."/>
            <person name="Lobanov A.V."/>
            <person name="Lohr M."/>
            <person name="Manuell A."/>
            <person name="Meier I."/>
            <person name="Mets L."/>
            <person name="Mittag M."/>
            <person name="Mittelmeier T."/>
            <person name="Moroney J.V."/>
            <person name="Moseley J."/>
            <person name="Napoli C."/>
            <person name="Nedelcu A.M."/>
            <person name="Niyogi K."/>
            <person name="Novoselov S.V."/>
            <person name="Paulsen I.T."/>
            <person name="Pazour G.J."/>
            <person name="Purton S."/>
            <person name="Ral J.P."/>
            <person name="Riano-Pachon D.M."/>
            <person name="Riekhof W."/>
            <person name="Rymarquis L."/>
            <person name="Schroda M."/>
            <person name="Stern D."/>
            <person name="Umen J."/>
            <person name="Willows R."/>
            <person name="Wilson N."/>
            <person name="Zimmer S.L."/>
            <person name="Allmer J."/>
            <person name="Balk J."/>
            <person name="Bisova K."/>
            <person name="Chen C.J."/>
            <person name="Elias M."/>
            <person name="Gendler K."/>
            <person name="Hauser C."/>
            <person name="Lamb M.R."/>
            <person name="Ledford H."/>
            <person name="Long J.C."/>
            <person name="Minagawa J."/>
            <person name="Page M.D."/>
            <person name="Pan J."/>
            <person name="Pootakham W."/>
            <person name="Roje S."/>
            <person name="Rose A."/>
            <person name="Stahlberg E."/>
            <person name="Terauchi A.M."/>
            <person name="Yang P."/>
            <person name="Ball S."/>
            <person name="Bowler C."/>
            <person name="Dieckmann C.L."/>
            <person name="Gladyshev V.N."/>
            <person name="Green P."/>
            <person name="Jorgensen R."/>
            <person name="Mayfield S."/>
            <person name="Mueller-Roeber B."/>
            <person name="Rajamani S."/>
            <person name="Sayre R.T."/>
            <person name="Brokstein P."/>
            <person name="Dubchak I."/>
            <person name="Goodstein D."/>
            <person name="Hornick L."/>
            <person name="Huang Y.W."/>
            <person name="Jhaveri J."/>
            <person name="Luo Y."/>
            <person name="Martinez D."/>
            <person name="Ngau W.C."/>
            <person name="Otillar B."/>
            <person name="Poliakov A."/>
            <person name="Porter A."/>
            <person name="Szajkowski L."/>
            <person name="Werner G."/>
            <person name="Zhou K."/>
            <person name="Grigoriev I.V."/>
            <person name="Rokhsar D.S."/>
            <person name="Grossman A.R."/>
        </authorList>
    </citation>
    <scope>NUCLEOTIDE SEQUENCE [LARGE SCALE GENOMIC DNA]</scope>
    <source>
        <strain>CC-503</strain>
    </source>
</reference>
<reference key="2">
    <citation type="journal article" date="2014" name="Plant J.">
        <title>The BSD2 ortholog in Chlamydomonas reinhardtii is a polysome-associated chaperone that co-migrates on sucrose gradients with the rbcL transcript encoding the Rubisco large subunit.</title>
        <authorList>
            <person name="Doron L."/>
            <person name="Segal N."/>
            <person name="Gibori H."/>
            <person name="Shapira M."/>
        </authorList>
    </citation>
    <scope>FUNCTION</scope>
    <scope>SUBCELLULAR LOCATION</scope>
    <scope>MUTAGENESIS OF CYS-42; CYS-78; CYS-81; CYS-89; CYS-92; CYS-133; CYS-136; CYS-144 AND CYS-147</scope>
</reference>
<protein>
    <recommendedName>
        <fullName evidence="4">Protein BUNDLE SHEATH DEFECTIVE 2, chloroplastic</fullName>
        <shortName evidence="5">CrBSD2</shortName>
    </recommendedName>
</protein>
<evidence type="ECO:0000250" key="1">
    <source>
        <dbReference type="UniProtKB" id="Q9SN73"/>
    </source>
</evidence>
<evidence type="ECO:0000255" key="2"/>
<evidence type="ECO:0000269" key="3">
    <source>
    </source>
</evidence>
<evidence type="ECO:0000303" key="4">
    <source>
    </source>
</evidence>
<evidence type="ECO:0000305" key="5"/>
<evidence type="ECO:0000312" key="6">
    <source>
        <dbReference type="EMBL" id="EDP03249.1"/>
    </source>
</evidence>
<evidence type="ECO:0000312" key="7">
    <source>
        <dbReference type="EMBL" id="PNW85892.1"/>
    </source>
</evidence>
<dbReference type="EMBL" id="CM008964">
    <property type="protein sequence ID" value="PNW85892.1"/>
    <property type="molecule type" value="Genomic_DNA"/>
</dbReference>
<dbReference type="EMBL" id="DS496126">
    <property type="protein sequence ID" value="EDP03249.1"/>
    <property type="status" value="ALT_SEQ"/>
    <property type="molecule type" value="Genomic_DNA"/>
</dbReference>
<dbReference type="SMR" id="A0A2K3DZC4"/>
<dbReference type="STRING" id="3055.A0A2K3DZC4"/>
<dbReference type="PaxDb" id="3055-EDP03249"/>
<dbReference type="EnsemblPlants" id="PNW85892">
    <property type="protein sequence ID" value="PNW85892"/>
    <property type="gene ID" value="CHLRE_03g201050v5"/>
</dbReference>
<dbReference type="Gramene" id="PNW85892">
    <property type="protein sequence ID" value="PNW85892"/>
    <property type="gene ID" value="CHLRE_03g201050v5"/>
</dbReference>
<dbReference type="eggNOG" id="ENOG502S1HB">
    <property type="taxonomic scope" value="Eukaryota"/>
</dbReference>
<dbReference type="HOGENOM" id="CLU_1909641_0_0_1"/>
<dbReference type="InParanoid" id="A0A2K3DZC4"/>
<dbReference type="OrthoDB" id="542764at2759"/>
<dbReference type="Proteomes" id="UP000006906">
    <property type="component" value="Chromosome 3"/>
</dbReference>
<dbReference type="ExpressionAtlas" id="A0A2K3DZC4">
    <property type="expression patterns" value="baseline and differential"/>
</dbReference>
<dbReference type="GO" id="GO:0009570">
    <property type="term" value="C:chloroplast stroma"/>
    <property type="evidence" value="ECO:0000314"/>
    <property type="project" value="UniProtKB"/>
</dbReference>
<dbReference type="GO" id="GO:0101031">
    <property type="term" value="C:protein folding chaperone complex"/>
    <property type="evidence" value="ECO:0000314"/>
    <property type="project" value="UniProtKB"/>
</dbReference>
<dbReference type="GO" id="GO:0046872">
    <property type="term" value="F:metal ion binding"/>
    <property type="evidence" value="ECO:0007669"/>
    <property type="project" value="UniProtKB-KW"/>
</dbReference>
<dbReference type="GO" id="GO:0044183">
    <property type="term" value="F:protein folding chaperone"/>
    <property type="evidence" value="ECO:0000314"/>
    <property type="project" value="UniProtKB"/>
</dbReference>
<dbReference type="GO" id="GO:0061077">
    <property type="term" value="P:chaperone-mediated protein folding"/>
    <property type="evidence" value="ECO:0000314"/>
    <property type="project" value="UniProtKB"/>
</dbReference>
<dbReference type="GO" id="GO:0110102">
    <property type="term" value="P:ribulose bisphosphate carboxylase complex assembly"/>
    <property type="evidence" value="ECO:0000314"/>
    <property type="project" value="UniProtKB"/>
</dbReference>
<dbReference type="PANTHER" id="PTHR15852">
    <property type="entry name" value="PLASTID TRANSCRIPTIONALLY ACTIVE PROTEIN"/>
    <property type="match status" value="1"/>
</dbReference>
<dbReference type="PANTHER" id="PTHR15852:SF52">
    <property type="entry name" value="THYLAKOID LUMENAL P17.1 PROTEIN"/>
    <property type="match status" value="1"/>
</dbReference>
<accession>A0A2K3DZC4</accession>
<accession>A8IXN3</accession>
<keyword id="KW-0143">Chaperone</keyword>
<keyword id="KW-0150">Chloroplast</keyword>
<keyword id="KW-0479">Metal-binding</keyword>
<keyword id="KW-0934">Plastid</keyword>
<keyword id="KW-1185">Reference proteome</keyword>
<keyword id="KW-0677">Repeat</keyword>
<keyword id="KW-0809">Transit peptide</keyword>
<keyword id="KW-0862">Zinc</keyword>
<organism>
    <name type="scientific">Chlamydomonas reinhardtii</name>
    <name type="common">Chlamydomonas smithii</name>
    <dbReference type="NCBI Taxonomy" id="3055"/>
    <lineage>
        <taxon>Eukaryota</taxon>
        <taxon>Viridiplantae</taxon>
        <taxon>Chlorophyta</taxon>
        <taxon>core chlorophytes</taxon>
        <taxon>Chlorophyceae</taxon>
        <taxon>CS clade</taxon>
        <taxon>Chlamydomonadales</taxon>
        <taxon>Chlamydomonadaceae</taxon>
        <taxon>Chlamydomonas</taxon>
    </lineage>
</organism>
<comment type="function">
    <text evidence="1 3">Chloroplast chaperone required for RuBisCo biogenesis and translational regulation of the RuBisCo large subunit (RbcL) (PubMed:25124725). Stabilizes an end-state assembly intermediate of eight RbcL subunits until the small subunits (RBCSs) become available to produce a complete stable RuBisCo complex containing eight small and eight large subunits (By similarity).</text>
</comment>
<comment type="subunit">
    <text evidence="1">Interacts with the RuBisCo large subunit (RbcL) assembled as an intermediate complex made of eight RbcL and eight BSD2 subunits.</text>
</comment>
<comment type="subcellular location">
    <subcellularLocation>
        <location evidence="3">Plastid</location>
        <location evidence="3">Chloroplast stroma</location>
    </subcellularLocation>
    <text evidence="3">Associates with chloroplastic polysomes.</text>
</comment>
<comment type="similarity">
    <text evidence="5">Belongs to the BSD2 chaperone family.</text>
</comment>
<comment type="sequence caution" evidence="5">
    <conflict type="erroneous gene model prediction">
        <sequence resource="EMBL-CDS" id="EDP03249"/>
    </conflict>
</comment>
<gene>
    <name evidence="4" type="primary">BSD2</name>
    <name evidence="6" type="synonym">ZNJ2</name>
    <name evidence="7" type="ORF">CHLRE_03g201050v5</name>
    <name evidence="6" type="ORF">CHLREDRAFT_183954</name>
</gene>